<proteinExistence type="inferred from homology"/>
<protein>
    <recommendedName>
        <fullName evidence="1">Inner membrane-spanning protein YciB</fullName>
    </recommendedName>
</protein>
<name>YCIB_SALCH</name>
<organism>
    <name type="scientific">Salmonella choleraesuis (strain SC-B67)</name>
    <dbReference type="NCBI Taxonomy" id="321314"/>
    <lineage>
        <taxon>Bacteria</taxon>
        <taxon>Pseudomonadati</taxon>
        <taxon>Pseudomonadota</taxon>
        <taxon>Gammaproteobacteria</taxon>
        <taxon>Enterobacterales</taxon>
        <taxon>Enterobacteriaceae</taxon>
        <taxon>Salmonella</taxon>
    </lineage>
</organism>
<comment type="function">
    <text evidence="1">Plays a role in cell envelope biogenesis, maintenance of cell envelope integrity and membrane homeostasis.</text>
</comment>
<comment type="subcellular location">
    <subcellularLocation>
        <location evidence="1">Cell inner membrane</location>
        <topology evidence="1">Multi-pass membrane protein</topology>
    </subcellularLocation>
</comment>
<comment type="similarity">
    <text evidence="1">Belongs to the YciB family.</text>
</comment>
<sequence length="179" mass="20763">MKQFLDFLPLVVFFAFYKLYDIYAATSALIVATAIVLIYSWVRYRKIEKMALITFVLVAVFGGLTLFFHNDEFIKWKVTVIYALFAGALLISQWVMKKPLIQRMLGKELALPQQVWSKLNLAWALFFIACGLANIYIAFWLPQNIWVNFKVFGLTALTLIFTLLSGVYIYRHLPQEDKS</sequence>
<evidence type="ECO:0000255" key="1">
    <source>
        <dbReference type="HAMAP-Rule" id="MF_00189"/>
    </source>
</evidence>
<accession>Q57NS4</accession>
<dbReference type="EMBL" id="AE017220">
    <property type="protein sequence ID" value="AAX65637.1"/>
    <property type="molecule type" value="Genomic_DNA"/>
</dbReference>
<dbReference type="RefSeq" id="WP_000808682.1">
    <property type="nucleotide sequence ID" value="NC_006905.1"/>
</dbReference>
<dbReference type="KEGG" id="sec:SCH_1731"/>
<dbReference type="HOGENOM" id="CLU_089554_2_0_6"/>
<dbReference type="Proteomes" id="UP000000538">
    <property type="component" value="Chromosome"/>
</dbReference>
<dbReference type="GO" id="GO:0005886">
    <property type="term" value="C:plasma membrane"/>
    <property type="evidence" value="ECO:0007669"/>
    <property type="project" value="UniProtKB-SubCell"/>
</dbReference>
<dbReference type="HAMAP" id="MF_00189">
    <property type="entry name" value="YciB"/>
    <property type="match status" value="1"/>
</dbReference>
<dbReference type="InterPro" id="IPR006008">
    <property type="entry name" value="YciB"/>
</dbReference>
<dbReference type="NCBIfam" id="TIGR00997">
    <property type="entry name" value="ispZ"/>
    <property type="match status" value="1"/>
</dbReference>
<dbReference type="NCBIfam" id="NF001324">
    <property type="entry name" value="PRK00259.1-2"/>
    <property type="match status" value="1"/>
</dbReference>
<dbReference type="NCBIfam" id="NF001325">
    <property type="entry name" value="PRK00259.1-3"/>
    <property type="match status" value="1"/>
</dbReference>
<dbReference type="NCBIfam" id="NF001326">
    <property type="entry name" value="PRK00259.1-4"/>
    <property type="match status" value="1"/>
</dbReference>
<dbReference type="PANTHER" id="PTHR36917:SF1">
    <property type="entry name" value="INNER MEMBRANE-SPANNING PROTEIN YCIB"/>
    <property type="match status" value="1"/>
</dbReference>
<dbReference type="PANTHER" id="PTHR36917">
    <property type="entry name" value="INTRACELLULAR SEPTATION PROTEIN A-RELATED"/>
    <property type="match status" value="1"/>
</dbReference>
<dbReference type="Pfam" id="PF04279">
    <property type="entry name" value="IspA"/>
    <property type="match status" value="1"/>
</dbReference>
<gene>
    <name evidence="1" type="primary">yciB</name>
    <name type="ordered locus">SCH_1731</name>
</gene>
<feature type="chain" id="PRO_1000021053" description="Inner membrane-spanning protein YciB">
    <location>
        <begin position="1"/>
        <end position="179"/>
    </location>
</feature>
<feature type="transmembrane region" description="Helical" evidence="1">
    <location>
        <begin position="22"/>
        <end position="42"/>
    </location>
</feature>
<feature type="transmembrane region" description="Helical" evidence="1">
    <location>
        <begin position="50"/>
        <end position="70"/>
    </location>
</feature>
<feature type="transmembrane region" description="Helical" evidence="1">
    <location>
        <begin position="76"/>
        <end position="96"/>
    </location>
</feature>
<feature type="transmembrane region" description="Helical" evidence="1">
    <location>
        <begin position="121"/>
        <end position="141"/>
    </location>
</feature>
<feature type="transmembrane region" description="Helical" evidence="1">
    <location>
        <begin position="149"/>
        <end position="169"/>
    </location>
</feature>
<keyword id="KW-0997">Cell inner membrane</keyword>
<keyword id="KW-1003">Cell membrane</keyword>
<keyword id="KW-0472">Membrane</keyword>
<keyword id="KW-0812">Transmembrane</keyword>
<keyword id="KW-1133">Transmembrane helix</keyword>
<reference key="1">
    <citation type="journal article" date="2005" name="Nucleic Acids Res.">
        <title>The genome sequence of Salmonella enterica serovar Choleraesuis, a highly invasive and resistant zoonotic pathogen.</title>
        <authorList>
            <person name="Chiu C.-H."/>
            <person name="Tang P."/>
            <person name="Chu C."/>
            <person name="Hu S."/>
            <person name="Bao Q."/>
            <person name="Yu J."/>
            <person name="Chou Y.-Y."/>
            <person name="Wang H.-S."/>
            <person name="Lee Y.-S."/>
        </authorList>
    </citation>
    <scope>NUCLEOTIDE SEQUENCE [LARGE SCALE GENOMIC DNA]</scope>
    <source>
        <strain>SC-B67</strain>
    </source>
</reference>